<accession>P40260</accession>
<accession>D6VUQ2</accession>
<organism>
    <name type="scientific">Saccharomyces cerevisiae (strain ATCC 204508 / S288c)</name>
    <name type="common">Baker's yeast</name>
    <dbReference type="NCBI Taxonomy" id="559292"/>
    <lineage>
        <taxon>Eukaryota</taxon>
        <taxon>Fungi</taxon>
        <taxon>Dikarya</taxon>
        <taxon>Ascomycota</taxon>
        <taxon>Saccharomycotina</taxon>
        <taxon>Saccharomycetes</taxon>
        <taxon>Saccharomycetales</taxon>
        <taxon>Saccharomycetaceae</taxon>
        <taxon>Saccharomyces</taxon>
    </lineage>
</organism>
<keyword id="KW-0924">Ammonia transport</keyword>
<keyword id="KW-0472">Membrane</keyword>
<keyword id="KW-0597">Phosphoprotein</keyword>
<keyword id="KW-1185">Reference proteome</keyword>
<keyword id="KW-0812">Transmembrane</keyword>
<keyword id="KW-1133">Transmembrane helix</keyword>
<keyword id="KW-0813">Transport</keyword>
<reference key="1">
    <citation type="journal article" date="1994" name="EMBO J.">
        <title>Cloning and expression of the MEP1 gene encoding an ammonium transporter in Saccharomyces cerevisiae.</title>
        <authorList>
            <person name="Marini A.-M."/>
            <person name="Vissers S."/>
            <person name="Urrestarazu A."/>
            <person name="Andre B."/>
        </authorList>
    </citation>
    <scope>NUCLEOTIDE SEQUENCE [GENOMIC DNA]</scope>
    <source>
        <strain>Sigma 1278B</strain>
    </source>
</reference>
<reference key="2">
    <citation type="journal article" date="1997" name="Yeast">
        <title>An 18.3 kb DNA fragment from yeast chromosome VII carries four unknown open reading frames, the gene for an Asn synthase, remnants of Ty and three tRNA genes.</title>
        <authorList>
            <person name="van Dyck L."/>
            <person name="Tettelin H."/>
            <person name="Purnelle B."/>
            <person name="Goffeau A."/>
        </authorList>
    </citation>
    <scope>NUCLEOTIDE SEQUENCE [GENOMIC DNA]</scope>
    <source>
        <strain>ATCC 96604 / S288c / FY1679</strain>
    </source>
</reference>
<reference key="3">
    <citation type="journal article" date="1997" name="Nature">
        <title>The nucleotide sequence of Saccharomyces cerevisiae chromosome VII.</title>
        <authorList>
            <person name="Tettelin H."/>
            <person name="Agostoni-Carbone M.L."/>
            <person name="Albermann K."/>
            <person name="Albers M."/>
            <person name="Arroyo J."/>
            <person name="Backes U."/>
            <person name="Barreiros T."/>
            <person name="Bertani I."/>
            <person name="Bjourson A.J."/>
            <person name="Brueckner M."/>
            <person name="Bruschi C.V."/>
            <person name="Carignani G."/>
            <person name="Castagnoli L."/>
            <person name="Cerdan E."/>
            <person name="Clemente M.L."/>
            <person name="Coblenz A."/>
            <person name="Coglievina M."/>
            <person name="Coissac E."/>
            <person name="Defoor E."/>
            <person name="Del Bino S."/>
            <person name="Delius H."/>
            <person name="Delneri D."/>
            <person name="de Wergifosse P."/>
            <person name="Dujon B."/>
            <person name="Durand P."/>
            <person name="Entian K.-D."/>
            <person name="Eraso P."/>
            <person name="Escribano V."/>
            <person name="Fabiani L."/>
            <person name="Fartmann B."/>
            <person name="Feroli F."/>
            <person name="Feuermann M."/>
            <person name="Frontali L."/>
            <person name="Garcia-Gonzalez M."/>
            <person name="Garcia-Saez M.I."/>
            <person name="Goffeau A."/>
            <person name="Guerreiro P."/>
            <person name="Hani J."/>
            <person name="Hansen M."/>
            <person name="Hebling U."/>
            <person name="Hernandez K."/>
            <person name="Heumann K."/>
            <person name="Hilger F."/>
            <person name="Hofmann B."/>
            <person name="Indge K.J."/>
            <person name="James C.M."/>
            <person name="Klima R."/>
            <person name="Koetter P."/>
            <person name="Kramer B."/>
            <person name="Kramer W."/>
            <person name="Lauquin G."/>
            <person name="Leuther H."/>
            <person name="Louis E.J."/>
            <person name="Maillier E."/>
            <person name="Marconi A."/>
            <person name="Martegani E."/>
            <person name="Mazon M.J."/>
            <person name="Mazzoni C."/>
            <person name="McReynolds A.D.K."/>
            <person name="Melchioretto P."/>
            <person name="Mewes H.-W."/>
            <person name="Minenkova O."/>
            <person name="Mueller-Auer S."/>
            <person name="Nawrocki A."/>
            <person name="Netter P."/>
            <person name="Neu R."/>
            <person name="Nombela C."/>
            <person name="Oliver S.G."/>
            <person name="Panzeri L."/>
            <person name="Paoluzi S."/>
            <person name="Plevani P."/>
            <person name="Portetelle D."/>
            <person name="Portillo F."/>
            <person name="Potier S."/>
            <person name="Purnelle B."/>
            <person name="Rieger M."/>
            <person name="Riles L."/>
            <person name="Rinaldi T."/>
            <person name="Robben J."/>
            <person name="Rodrigues-Pousada C."/>
            <person name="Rodriguez-Belmonte E."/>
            <person name="Rodriguez-Torres A.M."/>
            <person name="Rose M."/>
            <person name="Ruzzi M."/>
            <person name="Saliola M."/>
            <person name="Sanchez-Perez M."/>
            <person name="Schaefer B."/>
            <person name="Schaefer M."/>
            <person name="Scharfe M."/>
            <person name="Schmidheini T."/>
            <person name="Schreer A."/>
            <person name="Skala J."/>
            <person name="Souciet J.-L."/>
            <person name="Steensma H.Y."/>
            <person name="Talla E."/>
            <person name="Thierry A."/>
            <person name="Vandenbol M."/>
            <person name="van der Aart Q.J.M."/>
            <person name="Van Dyck L."/>
            <person name="Vanoni M."/>
            <person name="Verhasselt P."/>
            <person name="Voet M."/>
            <person name="Volckaert G."/>
            <person name="Wambutt R."/>
            <person name="Watson M.D."/>
            <person name="Weber N."/>
            <person name="Wedler E."/>
            <person name="Wedler H."/>
            <person name="Wipfli P."/>
            <person name="Wolf K."/>
            <person name="Wright L.F."/>
            <person name="Zaccaria P."/>
            <person name="Zimmermann M."/>
            <person name="Zollner A."/>
            <person name="Kleine K."/>
        </authorList>
    </citation>
    <scope>NUCLEOTIDE SEQUENCE [LARGE SCALE GENOMIC DNA]</scope>
    <source>
        <strain>ATCC 204508 / S288c</strain>
    </source>
</reference>
<reference key="4">
    <citation type="journal article" date="2014" name="G3 (Bethesda)">
        <title>The reference genome sequence of Saccharomyces cerevisiae: Then and now.</title>
        <authorList>
            <person name="Engel S.R."/>
            <person name="Dietrich F.S."/>
            <person name="Fisk D.G."/>
            <person name="Binkley G."/>
            <person name="Balakrishnan R."/>
            <person name="Costanzo M.C."/>
            <person name="Dwight S.S."/>
            <person name="Hitz B.C."/>
            <person name="Karra K."/>
            <person name="Nash R.S."/>
            <person name="Weng S."/>
            <person name="Wong E.D."/>
            <person name="Lloyd P."/>
            <person name="Skrzypek M.S."/>
            <person name="Miyasato S.R."/>
            <person name="Simison M."/>
            <person name="Cherry J.M."/>
        </authorList>
    </citation>
    <scope>GENOME REANNOTATION</scope>
    <source>
        <strain>ATCC 204508 / S288c</strain>
    </source>
</reference>
<reference key="5">
    <citation type="journal article" date="1997" name="Mol. Cell. Biol.">
        <title>A family of ammonium transporters in Saccharomyces cerevisiae.</title>
        <authorList>
            <person name="Marini A.-M."/>
            <person name="Soussi-Boudekou S."/>
            <person name="Vissers S."/>
            <person name="Andre B."/>
        </authorList>
    </citation>
    <scope>FUNCTION</scope>
    <source>
        <strain>Sigma 1278B</strain>
    </source>
</reference>
<reference key="6">
    <citation type="journal article" date="2001" name="Mol. Cell. Biol.">
        <title>Evidence that fungal MEP proteins mediate diffusion of the uncharged species NH(3) across the cytoplasmic membrane.</title>
        <authorList>
            <person name="Soupene E."/>
            <person name="Ramirez R.M."/>
            <person name="Kustu S."/>
        </authorList>
    </citation>
    <scope>FUNCTION</scope>
</reference>
<reference key="7">
    <citation type="journal article" date="2006" name="Proc. Natl. Acad. Sci. U.S.A.">
        <title>A global topology map of the Saccharomyces cerevisiae membrane proteome.</title>
        <authorList>
            <person name="Kim H."/>
            <person name="Melen K."/>
            <person name="Oesterberg M."/>
            <person name="von Heijne G."/>
        </authorList>
    </citation>
    <scope>TOPOLOGY [LARGE SCALE ANALYSIS]</scope>
    <source>
        <strain>ATCC 208353 / W303-1A</strain>
    </source>
</reference>
<reference key="8">
    <citation type="journal article" date="2009" name="Science">
        <title>Global analysis of Cdk1 substrate phosphorylation sites provides insights into evolution.</title>
        <authorList>
            <person name="Holt L.J."/>
            <person name="Tuch B.B."/>
            <person name="Villen J."/>
            <person name="Johnson A.D."/>
            <person name="Gygi S.P."/>
            <person name="Morgan D.O."/>
        </authorList>
    </citation>
    <scope>PHOSPHORYLATION [LARGE SCALE ANALYSIS] AT SER-442 AND SER-445</scope>
    <scope>IDENTIFICATION BY MASS SPECTROMETRY [LARGE SCALE ANALYSIS]</scope>
</reference>
<proteinExistence type="evidence at protein level"/>
<gene>
    <name type="primary">MEP1</name>
    <name type="synonym">AMT1</name>
    <name type="ordered locus">YGR121C</name>
    <name type="ORF">G6331</name>
</gene>
<name>MEP1_YEAST</name>
<comment type="function">
    <text evidence="3 4">Transporter for ammonium (both charged and uncharged NH3 and NH4) to use as a nitrogen source. Can also transport methylamine. The affinity of MEP1 is about twenty times lower than that of MEP2. MEP3 has the lowest affinity.</text>
</comment>
<comment type="interaction">
    <interactant intactId="EBI-10714">
        <id>P40260</id>
    </interactant>
    <interactant intactId="EBI-10729">
        <id>P53390</id>
        <label>MEP3</label>
    </interactant>
    <organismsDiffer>false</organismsDiffer>
    <experiments>3</experiments>
</comment>
<comment type="subcellular location">
    <subcellularLocation>
        <location>Membrane</location>
        <topology>Multi-pass membrane protein</topology>
    </subcellularLocation>
</comment>
<comment type="similarity">
    <text evidence="5">Belongs to the ammonia transporter channel (TC 1.A.11.2) family.</text>
</comment>
<evidence type="ECO:0000255" key="1"/>
<evidence type="ECO:0000256" key="2">
    <source>
        <dbReference type="SAM" id="MobiDB-lite"/>
    </source>
</evidence>
<evidence type="ECO:0000269" key="3">
    <source>
    </source>
</evidence>
<evidence type="ECO:0000269" key="4">
    <source>
    </source>
</evidence>
<evidence type="ECO:0000305" key="5"/>
<evidence type="ECO:0007744" key="6">
    <source>
    </source>
</evidence>
<sequence length="492" mass="54202">MESRTTGPLTTETYDGPTVAFMILGAALVFFMVPGLGFLYSGLARRKSALALIWVVLMATLVGILQWYFWGYSLAFSKSAPNNKFIGNLDSFGFRNVYGKKFDEDAYPELAYATFQMMFSCVNLSIIAGATAERGRLLPHMVFLFILATIGYCPVTYWIWSPGGWAYQWGVLDWAGGGNIEILSAVSGFVYSWFLGKRNEKLLINFRPHNVSLVTLGTSILWFGWLLFNSASSLSPNLRSVYAFMNTCLSAITGGMTWCLLDYRSEKKWSTVGLCSGIISGLVAATPSSGCITLYGSLIQGIVAGVVCNFATKLKYYAKVDDAMDILAEHGVAGVIGLIFNALFGADWVIGMDGTTEHEGGWVTHNYKQMYKQIAYIAASIGYTAAVTAIICFVLGYIPGMRLRISEEAEEAGMDEDQIGEFAYDYVEVRRDYYLWGVDEDSQRSDVNHRVNNAHLAAERSSSGTNSSSDGNGEMIQSEKILPIHQEDPANR</sequence>
<dbReference type="EMBL" id="X77608">
    <property type="protein sequence ID" value="CAA54699.1"/>
    <property type="molecule type" value="Genomic_DNA"/>
</dbReference>
<dbReference type="EMBL" id="X83099">
    <property type="protein sequence ID" value="CAA58156.1"/>
    <property type="molecule type" value="Genomic_DNA"/>
</dbReference>
<dbReference type="EMBL" id="Z72906">
    <property type="protein sequence ID" value="CAA97132.1"/>
    <property type="molecule type" value="Genomic_DNA"/>
</dbReference>
<dbReference type="EMBL" id="BK006941">
    <property type="protein sequence ID" value="DAA08213.1"/>
    <property type="molecule type" value="Genomic_DNA"/>
</dbReference>
<dbReference type="PIR" id="S46225">
    <property type="entry name" value="S46225"/>
</dbReference>
<dbReference type="RefSeq" id="NP_011636.3">
    <property type="nucleotide sequence ID" value="NM_001181250.3"/>
</dbReference>
<dbReference type="SMR" id="P40260"/>
<dbReference type="BioGRID" id="33367">
    <property type="interactions" value="132"/>
</dbReference>
<dbReference type="DIP" id="DIP-5530N"/>
<dbReference type="FunCoup" id="P40260">
    <property type="interactions" value="441"/>
</dbReference>
<dbReference type="IntAct" id="P40260">
    <property type="interactions" value="14"/>
</dbReference>
<dbReference type="MINT" id="P40260"/>
<dbReference type="STRING" id="4932.YGR121C"/>
<dbReference type="TCDB" id="1.A.11.3.1">
    <property type="family name" value="the ammonium transporter channel (amt) family"/>
</dbReference>
<dbReference type="GlyGen" id="P40260">
    <property type="glycosylation" value="1 site"/>
</dbReference>
<dbReference type="iPTMnet" id="P40260"/>
<dbReference type="PaxDb" id="4932-YGR121C"/>
<dbReference type="PeptideAtlas" id="P40260"/>
<dbReference type="EnsemblFungi" id="YGR121C_mRNA">
    <property type="protein sequence ID" value="YGR121C"/>
    <property type="gene ID" value="YGR121C"/>
</dbReference>
<dbReference type="GeneID" id="853019"/>
<dbReference type="KEGG" id="sce:YGR121C"/>
<dbReference type="AGR" id="SGD:S000003353"/>
<dbReference type="SGD" id="S000003353">
    <property type="gene designation" value="MEP1"/>
</dbReference>
<dbReference type="VEuPathDB" id="FungiDB:YGR121C"/>
<dbReference type="eggNOG" id="KOG0682">
    <property type="taxonomic scope" value="Eukaryota"/>
</dbReference>
<dbReference type="GeneTree" id="ENSGT00530000064546"/>
<dbReference type="HOGENOM" id="CLU_000445_33_0_1"/>
<dbReference type="InParanoid" id="P40260"/>
<dbReference type="OMA" id="RANYNAY"/>
<dbReference type="OrthoDB" id="534912at2759"/>
<dbReference type="BioCyc" id="YEAST:G3O-30828-MONOMER"/>
<dbReference type="BioGRID-ORCS" id="853019">
    <property type="hits" value="0 hits in 10 CRISPR screens"/>
</dbReference>
<dbReference type="PRO" id="PR:P40260"/>
<dbReference type="Proteomes" id="UP000002311">
    <property type="component" value="Chromosome VII"/>
</dbReference>
<dbReference type="RNAct" id="P40260">
    <property type="molecule type" value="protein"/>
</dbReference>
<dbReference type="GO" id="GO:0005783">
    <property type="term" value="C:endoplasmic reticulum"/>
    <property type="evidence" value="ECO:0007005"/>
    <property type="project" value="SGD"/>
</dbReference>
<dbReference type="GO" id="GO:0005886">
    <property type="term" value="C:plasma membrane"/>
    <property type="evidence" value="ECO:0000314"/>
    <property type="project" value="SGD"/>
</dbReference>
<dbReference type="GO" id="GO:0008519">
    <property type="term" value="F:ammonium channel activity"/>
    <property type="evidence" value="ECO:0000314"/>
    <property type="project" value="SGD"/>
</dbReference>
<dbReference type="GO" id="GO:0072488">
    <property type="term" value="P:ammonium transmembrane transport"/>
    <property type="evidence" value="ECO:0000315"/>
    <property type="project" value="SGD"/>
</dbReference>
<dbReference type="GO" id="GO:0019740">
    <property type="term" value="P:nitrogen utilization"/>
    <property type="evidence" value="ECO:0000315"/>
    <property type="project" value="SGD"/>
</dbReference>
<dbReference type="FunFam" id="1.10.3430.10:FF:000003">
    <property type="entry name" value="Ammonium transporter"/>
    <property type="match status" value="1"/>
</dbReference>
<dbReference type="Gene3D" id="1.10.3430.10">
    <property type="entry name" value="Ammonium transporter AmtB like domains"/>
    <property type="match status" value="1"/>
</dbReference>
<dbReference type="InterPro" id="IPR029020">
    <property type="entry name" value="Ammonium/urea_transptr"/>
</dbReference>
<dbReference type="InterPro" id="IPR001905">
    <property type="entry name" value="Ammonium_transpt"/>
</dbReference>
<dbReference type="InterPro" id="IPR018047">
    <property type="entry name" value="Ammonium_transpt_CS"/>
</dbReference>
<dbReference type="InterPro" id="IPR024041">
    <property type="entry name" value="NH4_transpt_AmtB-like_dom"/>
</dbReference>
<dbReference type="NCBIfam" id="TIGR00836">
    <property type="entry name" value="amt"/>
    <property type="match status" value="1"/>
</dbReference>
<dbReference type="PANTHER" id="PTHR43029:SF4">
    <property type="entry name" value="AMMONIUM TRANSPORTER MEP1-RELATED"/>
    <property type="match status" value="1"/>
</dbReference>
<dbReference type="PANTHER" id="PTHR43029">
    <property type="entry name" value="AMMONIUM TRANSPORTER MEP2"/>
    <property type="match status" value="1"/>
</dbReference>
<dbReference type="Pfam" id="PF00909">
    <property type="entry name" value="Ammonium_transp"/>
    <property type="match status" value="1"/>
</dbReference>
<dbReference type="SUPFAM" id="SSF111352">
    <property type="entry name" value="Ammonium transporter"/>
    <property type="match status" value="1"/>
</dbReference>
<dbReference type="PROSITE" id="PS01219">
    <property type="entry name" value="AMMONIUM_TRANSP"/>
    <property type="match status" value="1"/>
</dbReference>
<feature type="chain" id="PRO_0000139754" description="Ammonium transporter MEP1">
    <location>
        <begin position="1"/>
        <end position="492"/>
    </location>
</feature>
<feature type="topological domain" description="Extracellular" evidence="1">
    <location>
        <begin position="1"/>
        <end position="18"/>
    </location>
</feature>
<feature type="transmembrane region" description="Helical" evidence="1">
    <location>
        <begin position="19"/>
        <end position="39"/>
    </location>
</feature>
<feature type="topological domain" description="Cytoplasmic" evidence="1">
    <location>
        <begin position="40"/>
        <end position="49"/>
    </location>
</feature>
<feature type="transmembrane region" description="Helical" evidence="1">
    <location>
        <begin position="50"/>
        <end position="70"/>
    </location>
</feature>
<feature type="topological domain" description="Extracellular" evidence="1">
    <location>
        <begin position="71"/>
        <end position="109"/>
    </location>
</feature>
<feature type="transmembrane region" description="Helical" evidence="1">
    <location>
        <begin position="110"/>
        <end position="130"/>
    </location>
</feature>
<feature type="topological domain" description="Cytoplasmic" evidence="1">
    <location>
        <begin position="131"/>
        <end position="140"/>
    </location>
</feature>
<feature type="transmembrane region" description="Helical" evidence="1">
    <location>
        <begin position="141"/>
        <end position="161"/>
    </location>
</feature>
<feature type="topological domain" description="Extracellular" evidence="1">
    <location>
        <begin position="162"/>
        <end position="174"/>
    </location>
</feature>
<feature type="transmembrane region" description="Helical" evidence="1">
    <location>
        <begin position="175"/>
        <end position="195"/>
    </location>
</feature>
<feature type="topological domain" description="Cytoplasmic" evidence="1">
    <location>
        <begin position="196"/>
        <end position="210"/>
    </location>
</feature>
<feature type="transmembrane region" description="Helical" evidence="1">
    <location>
        <begin position="211"/>
        <end position="231"/>
    </location>
</feature>
<feature type="topological domain" description="Extracellular" evidence="1">
    <location>
        <begin position="232"/>
        <end position="240"/>
    </location>
</feature>
<feature type="transmembrane region" description="Helical" evidence="1">
    <location>
        <begin position="241"/>
        <end position="261"/>
    </location>
</feature>
<feature type="topological domain" description="Cytoplasmic" evidence="1">
    <location>
        <begin position="262"/>
        <end position="268"/>
    </location>
</feature>
<feature type="transmembrane region" description="Helical" evidence="1">
    <location>
        <begin position="269"/>
        <end position="289"/>
    </location>
</feature>
<feature type="topological domain" description="Extracellular" evidence="1">
    <location>
        <position position="290"/>
    </location>
</feature>
<feature type="transmembrane region" description="Helical" evidence="1">
    <location>
        <begin position="291"/>
        <end position="311"/>
    </location>
</feature>
<feature type="topological domain" description="Cytoplasmic" evidence="1">
    <location>
        <begin position="312"/>
        <end position="331"/>
    </location>
</feature>
<feature type="transmembrane region" description="Helical" evidence="1">
    <location>
        <begin position="332"/>
        <end position="352"/>
    </location>
</feature>
<feature type="topological domain" description="Extracellular" evidence="1">
    <location>
        <begin position="353"/>
        <end position="373"/>
    </location>
</feature>
<feature type="transmembrane region" description="Helical" evidence="1">
    <location>
        <begin position="374"/>
        <end position="394"/>
    </location>
</feature>
<feature type="topological domain" description="Cytoplasmic" evidence="1">
    <location>
        <begin position="395"/>
        <end position="492"/>
    </location>
</feature>
<feature type="region of interest" description="Disordered" evidence="2">
    <location>
        <begin position="455"/>
        <end position="492"/>
    </location>
</feature>
<feature type="compositionally biased region" description="Low complexity" evidence="2">
    <location>
        <begin position="461"/>
        <end position="473"/>
    </location>
</feature>
<feature type="modified residue" description="Phosphoserine" evidence="6">
    <location>
        <position position="442"/>
    </location>
</feature>
<feature type="modified residue" description="Phosphoserine" evidence="6">
    <location>
        <position position="445"/>
    </location>
</feature>
<protein>
    <recommendedName>
        <fullName>Ammonium transporter MEP1</fullName>
    </recommendedName>
</protein>